<gene>
    <name type="primary">inx-11</name>
    <name type="synonym">opu-11</name>
    <name type="ORF">W04D2.3</name>
</gene>
<evidence type="ECO:0000250" key="1"/>
<evidence type="ECO:0000250" key="2">
    <source>
        <dbReference type="UniProtKB" id="O61715"/>
    </source>
</evidence>
<evidence type="ECO:0000255" key="3">
    <source>
        <dbReference type="PROSITE-ProRule" id="PRU00351"/>
    </source>
</evidence>
<evidence type="ECO:0000256" key="4">
    <source>
        <dbReference type="SAM" id="MobiDB-lite"/>
    </source>
</evidence>
<evidence type="ECO:0000305" key="5"/>
<name>INX11_CAEEL</name>
<dbReference type="EMBL" id="Z75552">
    <property type="protein sequence ID" value="CAA99940.1"/>
    <property type="molecule type" value="Genomic_DNA"/>
</dbReference>
<dbReference type="PIR" id="T26146">
    <property type="entry name" value="T26146"/>
</dbReference>
<dbReference type="RefSeq" id="NP_001256426.1">
    <property type="nucleotide sequence ID" value="NM_001269497.3"/>
</dbReference>
<dbReference type="SMR" id="Q23157"/>
<dbReference type="FunCoup" id="Q23157">
    <property type="interactions" value="188"/>
</dbReference>
<dbReference type="STRING" id="6239.W04D2.3b.1"/>
<dbReference type="PaxDb" id="6239-W04D2.3b"/>
<dbReference type="EnsemblMetazoa" id="W04D2.3a.1">
    <property type="protein sequence ID" value="W04D2.3a.1"/>
    <property type="gene ID" value="WBGene00002133"/>
</dbReference>
<dbReference type="GeneID" id="179710"/>
<dbReference type="KEGG" id="cel:CELE_W04D2.3"/>
<dbReference type="UCSC" id="W04D2.3">
    <property type="organism name" value="c. elegans"/>
</dbReference>
<dbReference type="AGR" id="WB:WBGene00002133"/>
<dbReference type="CTD" id="179710"/>
<dbReference type="WormBase" id="W04D2.3a">
    <property type="protein sequence ID" value="CE06538"/>
    <property type="gene ID" value="WBGene00002133"/>
    <property type="gene designation" value="inx-11"/>
</dbReference>
<dbReference type="eggNOG" id="ENOG502QT3V">
    <property type="taxonomic scope" value="Eukaryota"/>
</dbReference>
<dbReference type="HOGENOM" id="CLU_035763_0_2_1"/>
<dbReference type="InParanoid" id="Q23157"/>
<dbReference type="OrthoDB" id="5867527at2759"/>
<dbReference type="PhylomeDB" id="Q23157"/>
<dbReference type="PRO" id="PR:Q23157"/>
<dbReference type="Proteomes" id="UP000001940">
    <property type="component" value="Chromosome V"/>
</dbReference>
<dbReference type="Bgee" id="WBGene00002133">
    <property type="expression patterns" value="Expressed in pharyngeal muscle cell (C elegans) and 4 other cell types or tissues"/>
</dbReference>
<dbReference type="ExpressionAtlas" id="Q23157">
    <property type="expression patterns" value="baseline and differential"/>
</dbReference>
<dbReference type="GO" id="GO:0005921">
    <property type="term" value="C:gap junction"/>
    <property type="evidence" value="ECO:0000314"/>
    <property type="project" value="WormBase"/>
</dbReference>
<dbReference type="GO" id="GO:0005886">
    <property type="term" value="C:plasma membrane"/>
    <property type="evidence" value="ECO:0000250"/>
    <property type="project" value="UniProtKB"/>
</dbReference>
<dbReference type="GO" id="GO:0005243">
    <property type="term" value="F:gap junction channel activity"/>
    <property type="evidence" value="ECO:0000250"/>
    <property type="project" value="UniProtKB"/>
</dbReference>
<dbReference type="GO" id="GO:0055077">
    <property type="term" value="F:gap junction hemi-channel activity"/>
    <property type="evidence" value="ECO:0000250"/>
    <property type="project" value="UniProtKB"/>
</dbReference>
<dbReference type="GO" id="GO:0034220">
    <property type="term" value="P:monoatomic ion transmembrane transport"/>
    <property type="evidence" value="ECO:0007669"/>
    <property type="project" value="UniProtKB-KW"/>
</dbReference>
<dbReference type="InterPro" id="IPR000990">
    <property type="entry name" value="Innexin"/>
</dbReference>
<dbReference type="PANTHER" id="PTHR11893">
    <property type="entry name" value="INNEXIN"/>
    <property type="match status" value="1"/>
</dbReference>
<dbReference type="PANTHER" id="PTHR11893:SF31">
    <property type="entry name" value="INNEXIN-11"/>
    <property type="match status" value="1"/>
</dbReference>
<dbReference type="Pfam" id="PF00876">
    <property type="entry name" value="Innexin"/>
    <property type="match status" value="1"/>
</dbReference>
<dbReference type="PRINTS" id="PR01262">
    <property type="entry name" value="INNEXIN"/>
</dbReference>
<dbReference type="PROSITE" id="PS51013">
    <property type="entry name" value="PANNEXIN"/>
    <property type="match status" value="1"/>
</dbReference>
<comment type="function">
    <text evidence="2">Structural component of the gap junctions.</text>
</comment>
<comment type="subcellular location">
    <subcellularLocation>
        <location evidence="5">Cell membrane</location>
        <topology evidence="3">Multi-pass membrane protein</topology>
    </subcellularLocation>
    <subcellularLocation>
        <location evidence="1">Cell junction</location>
        <location evidence="1">Gap junction</location>
    </subcellularLocation>
</comment>
<comment type="similarity">
    <text evidence="3">Belongs to the pannexin family.</text>
</comment>
<sequence>MVMIETFLGMAKYLSPREDDDWSDRLNYLMTPNILLAFSVLISFKQFGGRPIECMFPNKFPGSWEQYAENYCWSQDTYFVEPTQDVSLLKKEERYTPDRQLSYYQWVPFFLLLQAAFFRAPSYLWKYFSNHSGIRIHEVVEKAKDSANVEEEVREKNILILKRHLSSALRFQANMERKKVQVHKTVTFLNFQYSSGFISWIYLFTKVLYFLNVFAQLYLMNYFLGTNRHHWYGFGVVQDIVQGEPWERSGYFPRAAVCDFEVRQVANIQRYSVQCVLVINIFNEKIFVLLWFWYVILLLSSTVSLVQWFIVLVFPCFSKWFVKQHLALSTLQNFNQRNSRREDSDVSKFVTQYLHKDGVFVLRMVSSHAGIIFATDLVQALYEAYDFQDKNKDVQGSPVSDDLQTISTGAESSIRQRKTRKGSRIEYKAGFPISTSLMPDKDDIESSSTSSEEDQKRVSNVITNI</sequence>
<organism>
    <name type="scientific">Caenorhabditis elegans</name>
    <dbReference type="NCBI Taxonomy" id="6239"/>
    <lineage>
        <taxon>Eukaryota</taxon>
        <taxon>Metazoa</taxon>
        <taxon>Ecdysozoa</taxon>
        <taxon>Nematoda</taxon>
        <taxon>Chromadorea</taxon>
        <taxon>Rhabditida</taxon>
        <taxon>Rhabditina</taxon>
        <taxon>Rhabditomorpha</taxon>
        <taxon>Rhabditoidea</taxon>
        <taxon>Rhabditidae</taxon>
        <taxon>Peloderinae</taxon>
        <taxon>Caenorhabditis</taxon>
    </lineage>
</organism>
<protein>
    <recommendedName>
        <fullName>Innexin-11</fullName>
    </recommendedName>
    <alternativeName>
        <fullName>Protein opu-11</fullName>
    </alternativeName>
</protein>
<proteinExistence type="inferred from homology"/>
<feature type="chain" id="PRO_0000208512" description="Innexin-11">
    <location>
        <begin position="1"/>
        <end position="465"/>
    </location>
</feature>
<feature type="transmembrane region" description="Helical" evidence="3">
    <location>
        <begin position="29"/>
        <end position="49"/>
    </location>
</feature>
<feature type="transmembrane region" description="Helical" evidence="3">
    <location>
        <begin position="105"/>
        <end position="125"/>
    </location>
</feature>
<feature type="transmembrane region" description="Helical" evidence="3">
    <location>
        <begin position="195"/>
        <end position="215"/>
    </location>
</feature>
<feature type="transmembrane region" description="Helical" evidence="3">
    <location>
        <begin position="286"/>
        <end position="306"/>
    </location>
</feature>
<feature type="region of interest" description="Disordered" evidence="4">
    <location>
        <begin position="433"/>
        <end position="465"/>
    </location>
</feature>
<keyword id="KW-0965">Cell junction</keyword>
<keyword id="KW-1003">Cell membrane</keyword>
<keyword id="KW-0303">Gap junction</keyword>
<keyword id="KW-0407">Ion channel</keyword>
<keyword id="KW-0406">Ion transport</keyword>
<keyword id="KW-0472">Membrane</keyword>
<keyword id="KW-1185">Reference proteome</keyword>
<keyword id="KW-0812">Transmembrane</keyword>
<keyword id="KW-1133">Transmembrane helix</keyword>
<keyword id="KW-0813">Transport</keyword>
<reference key="1">
    <citation type="journal article" date="1998" name="Science">
        <title>Genome sequence of the nematode C. elegans: a platform for investigating biology.</title>
        <authorList>
            <consortium name="The C. elegans sequencing consortium"/>
        </authorList>
    </citation>
    <scope>NUCLEOTIDE SEQUENCE [LARGE SCALE GENOMIC DNA]</scope>
    <source>
        <strain>Bristol N2</strain>
    </source>
</reference>
<accession>Q23157</accession>